<proteinExistence type="inferred from homology"/>
<organism>
    <name type="scientific">Bacillus thuringiensis subsp. konkukian (strain 97-27)</name>
    <dbReference type="NCBI Taxonomy" id="281309"/>
    <lineage>
        <taxon>Bacteria</taxon>
        <taxon>Bacillati</taxon>
        <taxon>Bacillota</taxon>
        <taxon>Bacilli</taxon>
        <taxon>Bacillales</taxon>
        <taxon>Bacillaceae</taxon>
        <taxon>Bacillus</taxon>
        <taxon>Bacillus cereus group</taxon>
    </lineage>
</organism>
<sequence length="1171" mass="134249">MSLRFVIGRAGSGKSTLCLHEVQEELKQRPRGETILYLVPEQMTFQTQQALIGSEDVRGSIRAQVFSFSRLAWKVLQEVGGASRLHIDEAGVHMLLRKIVESRKDGLSVFQKAAEQNGFFEHLGSMIAEFKRYNVTPSNVYEMWQQLDAHSSSAEQKLLANKVYDLQLLYDDFERALIGKYLDSEDYLQLLVEKLPQSEYVKGAEIYIDGFHSFSPQELEIVRQLMICGARVTITLTIDEKTLAQPVNELDLFYETTLTYEKIKQVAREEKIEIEKTIPLMEQPRFHSPALAHLEAHYEARPNEKFNGEASVTIHTAANLRAEVEGVAREIRRLVAEENYRYRDVAVLLRNGESYYDVMRTLFTDYNIPHFIDEKRPMSHHPLVECIRSALEIISGNWRYDAVFRCVKTELLYPLDVRKETMREEMDEFENYCLAYGVQGKRWTSEDPWMYRRYRSLDDTNGMITDSEREMEEKINRLRDVVRTPVIRMQKRLKRAGTVMQMCEAVYLFLEELDVPKKLEALRIRAEESGDFLFATDHEQVWEEVMNLLDTFVEMLGEEKMSLSMFTDVMSTGLEALQFANIPPSLDQVLIANIDRSRLSNVKATFVIGVNEGVIPAAPMDEGMLSDEERDVLSAAGIELAPTTRQTLLEEQFVMYQMVTRATEKLYISCPLADEEGKTLLASSFIKKIKRMFPDVKDTFITNDVNDLSRSEQISFVATPEVTLSYVMQQLQTWKRYGFEGNLDFWWDVYNFYVTSDEWKQKSSRVLSSLFYRNRAQKLSTAVSRDLYGDKIKGSVSRMELFNRCAYAHFAQHGLSLRERDIFKLDAPDIGELFHAALKRIADRLLRENRTWADLSIKECEHLSTVVIEEIAPLLQRQILLSSNRHFYLKQKLQQIIFRTSIILREHAKSSGFVPVDLEVPFGMGGTGSLPPMEFSLPNGVKMEVVGRIDRVDKAEDENGTFLRIIDYKSSSKALDLTEVYYGLALQMLTYLDVVTSNAHTWMKKGHAASPAGVLYFHIHNPIVEVKGDASEAEIEKEILKKFKMKGLVLGDADVVRLMDNKLSTGSSDIISAGLKKDGSFSARSSIASEQEFNVLQKYVHHTFENIGKDITEGVIDIAPYKKGNKAACTFCNFKSVCQFDESLEDNQFRTLKDMKDSEAMEKIREEVGGE</sequence>
<dbReference type="EC" id="3.1.-.-" evidence="1"/>
<dbReference type="EMBL" id="AE017355">
    <property type="protein sequence ID" value="AAT61338.1"/>
    <property type="molecule type" value="Genomic_DNA"/>
</dbReference>
<dbReference type="RefSeq" id="WP_000058551.1">
    <property type="nucleotide sequence ID" value="NC_005957.1"/>
</dbReference>
<dbReference type="RefSeq" id="YP_035377.1">
    <property type="nucleotide sequence ID" value="NC_005957.1"/>
</dbReference>
<dbReference type="SMR" id="Q6HM44"/>
<dbReference type="KEGG" id="btk:BT9727_1040"/>
<dbReference type="PATRIC" id="fig|281309.8.peg.1094"/>
<dbReference type="HOGENOM" id="CLU_007838_0_0_9"/>
<dbReference type="Proteomes" id="UP000001301">
    <property type="component" value="Chromosome"/>
</dbReference>
<dbReference type="GO" id="GO:0051539">
    <property type="term" value="F:4 iron, 4 sulfur cluster binding"/>
    <property type="evidence" value="ECO:0007669"/>
    <property type="project" value="UniProtKB-KW"/>
</dbReference>
<dbReference type="GO" id="GO:0008409">
    <property type="term" value="F:5'-3' exonuclease activity"/>
    <property type="evidence" value="ECO:0007669"/>
    <property type="project" value="UniProtKB-UniRule"/>
</dbReference>
<dbReference type="GO" id="GO:0005524">
    <property type="term" value="F:ATP binding"/>
    <property type="evidence" value="ECO:0007669"/>
    <property type="project" value="UniProtKB-UniRule"/>
</dbReference>
<dbReference type="GO" id="GO:0003690">
    <property type="term" value="F:double-stranded DNA binding"/>
    <property type="evidence" value="ECO:0007669"/>
    <property type="project" value="UniProtKB-UniRule"/>
</dbReference>
<dbReference type="GO" id="GO:0004386">
    <property type="term" value="F:helicase activity"/>
    <property type="evidence" value="ECO:0007669"/>
    <property type="project" value="UniProtKB-KW"/>
</dbReference>
<dbReference type="GO" id="GO:0046872">
    <property type="term" value="F:metal ion binding"/>
    <property type="evidence" value="ECO:0007669"/>
    <property type="project" value="UniProtKB-KW"/>
</dbReference>
<dbReference type="GO" id="GO:0000724">
    <property type="term" value="P:double-strand break repair via homologous recombination"/>
    <property type="evidence" value="ECO:0007669"/>
    <property type="project" value="UniProtKB-UniRule"/>
</dbReference>
<dbReference type="FunFam" id="3.40.50.300:FF:001679">
    <property type="entry name" value="ATP-dependent helicase/deoxyribonuclease subunit B"/>
    <property type="match status" value="1"/>
</dbReference>
<dbReference type="FunFam" id="3.40.50.300:FF:001704">
    <property type="entry name" value="ATP-dependent helicase/deoxyribonuclease subunit B"/>
    <property type="match status" value="1"/>
</dbReference>
<dbReference type="FunFam" id="3.40.50.300:FF:001705">
    <property type="entry name" value="ATP-dependent helicase/deoxyribonuclease subunit B"/>
    <property type="match status" value="1"/>
</dbReference>
<dbReference type="FunFam" id="3.40.50.300:FF:001739">
    <property type="entry name" value="ATP-dependent helicase/deoxyribonuclease subunit B"/>
    <property type="match status" value="1"/>
</dbReference>
<dbReference type="FunFam" id="3.90.320.10:FF:000006">
    <property type="entry name" value="ATP-dependent helicase/deoxyribonuclease subunit B"/>
    <property type="match status" value="1"/>
</dbReference>
<dbReference type="Gene3D" id="3.90.320.10">
    <property type="match status" value="1"/>
</dbReference>
<dbReference type="Gene3D" id="6.10.140.1030">
    <property type="match status" value="1"/>
</dbReference>
<dbReference type="Gene3D" id="3.40.50.300">
    <property type="entry name" value="P-loop containing nucleotide triphosphate hydrolases"/>
    <property type="match status" value="4"/>
</dbReference>
<dbReference type="HAMAP" id="MF_01452">
    <property type="entry name" value="AddB_type1"/>
    <property type="match status" value="1"/>
</dbReference>
<dbReference type="InterPro" id="IPR049035">
    <property type="entry name" value="ADDB_N"/>
</dbReference>
<dbReference type="InterPro" id="IPR014140">
    <property type="entry name" value="DNA_helicase_suAddB"/>
</dbReference>
<dbReference type="InterPro" id="IPR014017">
    <property type="entry name" value="DNA_helicase_UvrD-like_C"/>
</dbReference>
<dbReference type="InterPro" id="IPR027417">
    <property type="entry name" value="P-loop_NTPase"/>
</dbReference>
<dbReference type="InterPro" id="IPR011604">
    <property type="entry name" value="PDDEXK-like_dom_sf"/>
</dbReference>
<dbReference type="InterPro" id="IPR038726">
    <property type="entry name" value="PDDEXK_AddAB-type"/>
</dbReference>
<dbReference type="NCBIfam" id="TIGR02773">
    <property type="entry name" value="addB_Gpos"/>
    <property type="match status" value="1"/>
</dbReference>
<dbReference type="PANTHER" id="PTHR30591">
    <property type="entry name" value="RECBCD ENZYME SUBUNIT RECC"/>
    <property type="match status" value="1"/>
</dbReference>
<dbReference type="PANTHER" id="PTHR30591:SF1">
    <property type="entry name" value="RECBCD ENZYME SUBUNIT RECC"/>
    <property type="match status" value="1"/>
</dbReference>
<dbReference type="Pfam" id="PF21445">
    <property type="entry name" value="ADDB_N"/>
    <property type="match status" value="1"/>
</dbReference>
<dbReference type="Pfam" id="PF12705">
    <property type="entry name" value="PDDEXK_1"/>
    <property type="match status" value="1"/>
</dbReference>
<dbReference type="Pfam" id="PF13361">
    <property type="entry name" value="UvrD_C"/>
    <property type="match status" value="1"/>
</dbReference>
<dbReference type="SUPFAM" id="SSF52540">
    <property type="entry name" value="P-loop containing nucleoside triphosphate hydrolases"/>
    <property type="match status" value="2"/>
</dbReference>
<dbReference type="PROSITE" id="PS51198">
    <property type="entry name" value="UVRD_HELICASE_ATP_BIND"/>
    <property type="match status" value="1"/>
</dbReference>
<dbReference type="PROSITE" id="PS51217">
    <property type="entry name" value="UVRD_HELICASE_CTER"/>
    <property type="match status" value="1"/>
</dbReference>
<comment type="function">
    <text evidence="1">The heterodimer acts as both an ATP-dependent DNA helicase and an ATP-dependent, dual-direction single-stranded exonuclease. Recognizes the chi site generating a DNA molecule suitable for the initiation of homologous recombination. The AddB subunit has 5' -&gt; 3' nuclease activity but not helicase activity.</text>
</comment>
<comment type="cofactor">
    <cofactor evidence="1">
        <name>Mg(2+)</name>
        <dbReference type="ChEBI" id="CHEBI:18420"/>
    </cofactor>
</comment>
<comment type="cofactor">
    <cofactor evidence="1">
        <name>[4Fe-4S] cluster</name>
        <dbReference type="ChEBI" id="CHEBI:49883"/>
    </cofactor>
    <text evidence="1">Binds 1 [4Fe-4S] cluster.</text>
</comment>
<comment type="subunit">
    <text evidence="1">Heterodimer of AddA and AddB.</text>
</comment>
<comment type="miscellaneous">
    <text evidence="1">Despite having conserved helicase domains, this subunit does not have helicase activity.</text>
</comment>
<comment type="similarity">
    <text evidence="1">Belongs to the helicase family. AddB/RexB type 1 subfamily.</text>
</comment>
<reference key="1">
    <citation type="journal article" date="2006" name="J. Bacteriol.">
        <title>Pathogenomic sequence analysis of Bacillus cereus and Bacillus thuringiensis isolates closely related to Bacillus anthracis.</title>
        <authorList>
            <person name="Han C.S."/>
            <person name="Xie G."/>
            <person name="Challacombe J.F."/>
            <person name="Altherr M.R."/>
            <person name="Bhotika S.S."/>
            <person name="Bruce D."/>
            <person name="Campbell C.S."/>
            <person name="Campbell M.L."/>
            <person name="Chen J."/>
            <person name="Chertkov O."/>
            <person name="Cleland C."/>
            <person name="Dimitrijevic M."/>
            <person name="Doggett N.A."/>
            <person name="Fawcett J.J."/>
            <person name="Glavina T."/>
            <person name="Goodwin L.A."/>
            <person name="Hill K.K."/>
            <person name="Hitchcock P."/>
            <person name="Jackson P.J."/>
            <person name="Keim P."/>
            <person name="Kewalramani A.R."/>
            <person name="Longmire J."/>
            <person name="Lucas S."/>
            <person name="Malfatti S."/>
            <person name="McMurry K."/>
            <person name="Meincke L.J."/>
            <person name="Misra M."/>
            <person name="Moseman B.L."/>
            <person name="Mundt M."/>
            <person name="Munk A.C."/>
            <person name="Okinaka R.T."/>
            <person name="Parson-Quintana B."/>
            <person name="Reilly L.P."/>
            <person name="Richardson P."/>
            <person name="Robinson D.L."/>
            <person name="Rubin E."/>
            <person name="Saunders E."/>
            <person name="Tapia R."/>
            <person name="Tesmer J.G."/>
            <person name="Thayer N."/>
            <person name="Thompson L.S."/>
            <person name="Tice H."/>
            <person name="Ticknor L.O."/>
            <person name="Wills P.L."/>
            <person name="Brettin T.S."/>
            <person name="Gilna P."/>
        </authorList>
    </citation>
    <scope>NUCLEOTIDE SEQUENCE [LARGE SCALE GENOMIC DNA]</scope>
    <source>
        <strain>97-27</strain>
    </source>
</reference>
<gene>
    <name evidence="1" type="primary">addB</name>
    <name type="ordered locus">BT9727_1040</name>
</gene>
<name>ADDB_BACHK</name>
<keyword id="KW-0004">4Fe-4S</keyword>
<keyword id="KW-0067">ATP-binding</keyword>
<keyword id="KW-0227">DNA damage</keyword>
<keyword id="KW-0234">DNA repair</keyword>
<keyword id="KW-0238">DNA-binding</keyword>
<keyword id="KW-0269">Exonuclease</keyword>
<keyword id="KW-0347">Helicase</keyword>
<keyword id="KW-0378">Hydrolase</keyword>
<keyword id="KW-0408">Iron</keyword>
<keyword id="KW-0411">Iron-sulfur</keyword>
<keyword id="KW-0479">Metal-binding</keyword>
<keyword id="KW-0540">Nuclease</keyword>
<keyword id="KW-0547">Nucleotide-binding</keyword>
<accession>Q6HM44</accession>
<protein>
    <recommendedName>
        <fullName evidence="1">ATP-dependent helicase/deoxyribonuclease subunit B</fullName>
        <ecNumber evidence="1">3.1.-.-</ecNumber>
    </recommendedName>
    <alternativeName>
        <fullName evidence="1">ATP-dependent helicase/nuclease subunit AddB</fullName>
    </alternativeName>
</protein>
<evidence type="ECO:0000255" key="1">
    <source>
        <dbReference type="HAMAP-Rule" id="MF_01452"/>
    </source>
</evidence>
<feature type="chain" id="PRO_0000379165" description="ATP-dependent helicase/deoxyribonuclease subunit B">
    <location>
        <begin position="1"/>
        <end position="1171"/>
    </location>
</feature>
<feature type="domain" description="UvrD-like helicase ATP-binding" evidence="1">
    <location>
        <begin position="1"/>
        <end position="343"/>
    </location>
</feature>
<feature type="domain" description="UvrD-like helicase C-terminal" evidence="1">
    <location>
        <begin position="281"/>
        <end position="587"/>
    </location>
</feature>
<feature type="binding site" evidence="1">
    <location>
        <begin position="8"/>
        <end position="15"/>
    </location>
    <ligand>
        <name>ATP</name>
        <dbReference type="ChEBI" id="CHEBI:30616"/>
    </ligand>
</feature>
<feature type="binding site" evidence="1">
    <location>
        <position position="805"/>
    </location>
    <ligand>
        <name>[4Fe-4S] cluster</name>
        <dbReference type="ChEBI" id="CHEBI:49883"/>
    </ligand>
</feature>
<feature type="binding site" evidence="1">
    <location>
        <position position="1129"/>
    </location>
    <ligand>
        <name>[4Fe-4S] cluster</name>
        <dbReference type="ChEBI" id="CHEBI:49883"/>
    </ligand>
</feature>
<feature type="binding site" evidence="1">
    <location>
        <position position="1132"/>
    </location>
    <ligand>
        <name>[4Fe-4S] cluster</name>
        <dbReference type="ChEBI" id="CHEBI:49883"/>
    </ligand>
</feature>
<feature type="binding site" evidence="1">
    <location>
        <position position="1138"/>
    </location>
    <ligand>
        <name>[4Fe-4S] cluster</name>
        <dbReference type="ChEBI" id="CHEBI:49883"/>
    </ligand>
</feature>